<accession>A5UDW7</accession>
<feature type="chain" id="PRO_1000126639" description="Large ribosomal subunit protein bL31">
    <location>
        <begin position="1"/>
        <end position="70"/>
    </location>
</feature>
<feature type="binding site" evidence="1">
    <location>
        <position position="16"/>
    </location>
    <ligand>
        <name>Zn(2+)</name>
        <dbReference type="ChEBI" id="CHEBI:29105"/>
    </ligand>
</feature>
<feature type="binding site" evidence="1">
    <location>
        <position position="18"/>
    </location>
    <ligand>
        <name>Zn(2+)</name>
        <dbReference type="ChEBI" id="CHEBI:29105"/>
    </ligand>
</feature>
<feature type="binding site" evidence="1">
    <location>
        <position position="37"/>
    </location>
    <ligand>
        <name>Zn(2+)</name>
        <dbReference type="ChEBI" id="CHEBI:29105"/>
    </ligand>
</feature>
<feature type="binding site" evidence="1">
    <location>
        <position position="40"/>
    </location>
    <ligand>
        <name>Zn(2+)</name>
        <dbReference type="ChEBI" id="CHEBI:29105"/>
    </ligand>
</feature>
<comment type="function">
    <text evidence="1">Binds the 23S rRNA.</text>
</comment>
<comment type="cofactor">
    <cofactor evidence="1">
        <name>Zn(2+)</name>
        <dbReference type="ChEBI" id="CHEBI:29105"/>
    </cofactor>
    <text evidence="1">Binds 1 zinc ion per subunit.</text>
</comment>
<comment type="subunit">
    <text evidence="1">Part of the 50S ribosomal subunit.</text>
</comment>
<comment type="similarity">
    <text evidence="1">Belongs to the bacterial ribosomal protein bL31 family. Type A subfamily.</text>
</comment>
<evidence type="ECO:0000255" key="1">
    <source>
        <dbReference type="HAMAP-Rule" id="MF_00501"/>
    </source>
</evidence>
<evidence type="ECO:0000305" key="2"/>
<proteinExistence type="inferred from homology"/>
<gene>
    <name evidence="1" type="primary">rpmE</name>
    <name type="ordered locus">CGSHiEE_08305</name>
</gene>
<name>RL31_HAEIE</name>
<dbReference type="EMBL" id="CP000671">
    <property type="protein sequence ID" value="ABQ98968.1"/>
    <property type="molecule type" value="Genomic_DNA"/>
</dbReference>
<dbReference type="SMR" id="A5UDW7"/>
<dbReference type="KEGG" id="hip:CGSHiEE_08305"/>
<dbReference type="HOGENOM" id="CLU_114306_4_3_6"/>
<dbReference type="GO" id="GO:1990904">
    <property type="term" value="C:ribonucleoprotein complex"/>
    <property type="evidence" value="ECO:0007669"/>
    <property type="project" value="UniProtKB-KW"/>
</dbReference>
<dbReference type="GO" id="GO:0005840">
    <property type="term" value="C:ribosome"/>
    <property type="evidence" value="ECO:0007669"/>
    <property type="project" value="UniProtKB-KW"/>
</dbReference>
<dbReference type="GO" id="GO:0046872">
    <property type="term" value="F:metal ion binding"/>
    <property type="evidence" value="ECO:0007669"/>
    <property type="project" value="UniProtKB-KW"/>
</dbReference>
<dbReference type="GO" id="GO:0019843">
    <property type="term" value="F:rRNA binding"/>
    <property type="evidence" value="ECO:0007669"/>
    <property type="project" value="UniProtKB-KW"/>
</dbReference>
<dbReference type="GO" id="GO:0003735">
    <property type="term" value="F:structural constituent of ribosome"/>
    <property type="evidence" value="ECO:0007669"/>
    <property type="project" value="InterPro"/>
</dbReference>
<dbReference type="GO" id="GO:0006412">
    <property type="term" value="P:translation"/>
    <property type="evidence" value="ECO:0007669"/>
    <property type="project" value="UniProtKB-UniRule"/>
</dbReference>
<dbReference type="FunFam" id="4.10.830.30:FF:000001">
    <property type="entry name" value="50S ribosomal protein L31"/>
    <property type="match status" value="1"/>
</dbReference>
<dbReference type="Gene3D" id="4.10.830.30">
    <property type="entry name" value="Ribosomal protein L31"/>
    <property type="match status" value="1"/>
</dbReference>
<dbReference type="HAMAP" id="MF_00501">
    <property type="entry name" value="Ribosomal_bL31_1"/>
    <property type="match status" value="1"/>
</dbReference>
<dbReference type="InterPro" id="IPR034704">
    <property type="entry name" value="Ribosomal_bL28/bL31-like_sf"/>
</dbReference>
<dbReference type="InterPro" id="IPR002150">
    <property type="entry name" value="Ribosomal_bL31"/>
</dbReference>
<dbReference type="InterPro" id="IPR027491">
    <property type="entry name" value="Ribosomal_bL31_A"/>
</dbReference>
<dbReference type="InterPro" id="IPR042105">
    <property type="entry name" value="Ribosomal_bL31_sf"/>
</dbReference>
<dbReference type="NCBIfam" id="TIGR00105">
    <property type="entry name" value="L31"/>
    <property type="match status" value="1"/>
</dbReference>
<dbReference type="NCBIfam" id="NF000612">
    <property type="entry name" value="PRK00019.1"/>
    <property type="match status" value="1"/>
</dbReference>
<dbReference type="NCBIfam" id="NF001809">
    <property type="entry name" value="PRK00528.1"/>
    <property type="match status" value="1"/>
</dbReference>
<dbReference type="PANTHER" id="PTHR33280">
    <property type="entry name" value="50S RIBOSOMAL PROTEIN L31, CHLOROPLASTIC"/>
    <property type="match status" value="1"/>
</dbReference>
<dbReference type="PANTHER" id="PTHR33280:SF6">
    <property type="entry name" value="LARGE RIBOSOMAL SUBUNIT PROTEIN BL31A"/>
    <property type="match status" value="1"/>
</dbReference>
<dbReference type="Pfam" id="PF01197">
    <property type="entry name" value="Ribosomal_L31"/>
    <property type="match status" value="1"/>
</dbReference>
<dbReference type="PRINTS" id="PR01249">
    <property type="entry name" value="RIBOSOMALL31"/>
</dbReference>
<dbReference type="SUPFAM" id="SSF143800">
    <property type="entry name" value="L28p-like"/>
    <property type="match status" value="1"/>
</dbReference>
<dbReference type="PROSITE" id="PS01143">
    <property type="entry name" value="RIBOSOMAL_L31"/>
    <property type="match status" value="1"/>
</dbReference>
<organism>
    <name type="scientific">Haemophilus influenzae (strain PittEE)</name>
    <dbReference type="NCBI Taxonomy" id="374930"/>
    <lineage>
        <taxon>Bacteria</taxon>
        <taxon>Pseudomonadati</taxon>
        <taxon>Pseudomonadota</taxon>
        <taxon>Gammaproteobacteria</taxon>
        <taxon>Pasteurellales</taxon>
        <taxon>Pasteurellaceae</taxon>
        <taxon>Haemophilus</taxon>
    </lineage>
</organism>
<sequence>MKQGIHPEYKEITATCSCGNVIKTRSTLGKDINLDVCGNCHPFYTGKQRVVDTGGRVERFNSRFKIPSTK</sequence>
<keyword id="KW-0479">Metal-binding</keyword>
<keyword id="KW-0687">Ribonucleoprotein</keyword>
<keyword id="KW-0689">Ribosomal protein</keyword>
<keyword id="KW-0694">RNA-binding</keyword>
<keyword id="KW-0699">rRNA-binding</keyword>
<keyword id="KW-0862">Zinc</keyword>
<reference key="1">
    <citation type="journal article" date="2007" name="Genome Biol.">
        <title>Characterization and modeling of the Haemophilus influenzae core and supragenomes based on the complete genomic sequences of Rd and 12 clinical nontypeable strains.</title>
        <authorList>
            <person name="Hogg J.S."/>
            <person name="Hu F.Z."/>
            <person name="Janto B."/>
            <person name="Boissy R."/>
            <person name="Hayes J."/>
            <person name="Keefe R."/>
            <person name="Post J.C."/>
            <person name="Ehrlich G.D."/>
        </authorList>
    </citation>
    <scope>NUCLEOTIDE SEQUENCE [LARGE SCALE GENOMIC DNA]</scope>
    <source>
        <strain>PittEE</strain>
    </source>
</reference>
<protein>
    <recommendedName>
        <fullName evidence="1">Large ribosomal subunit protein bL31</fullName>
    </recommendedName>
    <alternativeName>
        <fullName evidence="2">50S ribosomal protein L31</fullName>
    </alternativeName>
</protein>